<feature type="chain" id="PRO_1000196396" description="Small ribosomal subunit protein bS16">
    <location>
        <begin position="1"/>
        <end position="82"/>
    </location>
</feature>
<keyword id="KW-0687">Ribonucleoprotein</keyword>
<keyword id="KW-0689">Ribosomal protein</keyword>
<name>RS16_ECODH</name>
<evidence type="ECO:0000255" key="1">
    <source>
        <dbReference type="HAMAP-Rule" id="MF_00385"/>
    </source>
</evidence>
<evidence type="ECO:0000305" key="2"/>
<proteinExistence type="inferred from homology"/>
<protein>
    <recommendedName>
        <fullName evidence="1">Small ribosomal subunit protein bS16</fullName>
    </recommendedName>
    <alternativeName>
        <fullName evidence="2">30S ribosomal protein S16</fullName>
    </alternativeName>
</protein>
<accession>B1XBT1</accession>
<sequence>MVTIRLARHGAKKRPFYQVVVADSRNARNGRFIERVGFFNPIASEKEEGTRLDLDRIAHWVGQGATISDRVAALIKEVNKAA</sequence>
<gene>
    <name evidence="1" type="primary">rpsP</name>
    <name type="ordered locus">ECDH10B_2776</name>
</gene>
<organism>
    <name type="scientific">Escherichia coli (strain K12 / DH10B)</name>
    <dbReference type="NCBI Taxonomy" id="316385"/>
    <lineage>
        <taxon>Bacteria</taxon>
        <taxon>Pseudomonadati</taxon>
        <taxon>Pseudomonadota</taxon>
        <taxon>Gammaproteobacteria</taxon>
        <taxon>Enterobacterales</taxon>
        <taxon>Enterobacteriaceae</taxon>
        <taxon>Escherichia</taxon>
    </lineage>
</organism>
<reference key="1">
    <citation type="journal article" date="2008" name="J. Bacteriol.">
        <title>The complete genome sequence of Escherichia coli DH10B: insights into the biology of a laboratory workhorse.</title>
        <authorList>
            <person name="Durfee T."/>
            <person name="Nelson R."/>
            <person name="Baldwin S."/>
            <person name="Plunkett G. III"/>
            <person name="Burland V."/>
            <person name="Mau B."/>
            <person name="Petrosino J.F."/>
            <person name="Qin X."/>
            <person name="Muzny D.M."/>
            <person name="Ayele M."/>
            <person name="Gibbs R.A."/>
            <person name="Csorgo B."/>
            <person name="Posfai G."/>
            <person name="Weinstock G.M."/>
            <person name="Blattner F.R."/>
        </authorList>
    </citation>
    <scope>NUCLEOTIDE SEQUENCE [LARGE SCALE GENOMIC DNA]</scope>
    <source>
        <strain>K12 / DH10B</strain>
    </source>
</reference>
<dbReference type="EMBL" id="CP000948">
    <property type="protein sequence ID" value="ACB03755.1"/>
    <property type="molecule type" value="Genomic_DNA"/>
</dbReference>
<dbReference type="RefSeq" id="WP_000256450.1">
    <property type="nucleotide sequence ID" value="NC_010473.1"/>
</dbReference>
<dbReference type="SMR" id="B1XBT1"/>
<dbReference type="GeneID" id="93774459"/>
<dbReference type="KEGG" id="ecd:ECDH10B_2776"/>
<dbReference type="HOGENOM" id="CLU_100590_5_1_6"/>
<dbReference type="GO" id="GO:0005737">
    <property type="term" value="C:cytoplasm"/>
    <property type="evidence" value="ECO:0007669"/>
    <property type="project" value="UniProtKB-ARBA"/>
</dbReference>
<dbReference type="GO" id="GO:0015935">
    <property type="term" value="C:small ribosomal subunit"/>
    <property type="evidence" value="ECO:0007669"/>
    <property type="project" value="TreeGrafter"/>
</dbReference>
<dbReference type="GO" id="GO:0003735">
    <property type="term" value="F:structural constituent of ribosome"/>
    <property type="evidence" value="ECO:0007669"/>
    <property type="project" value="InterPro"/>
</dbReference>
<dbReference type="GO" id="GO:0006412">
    <property type="term" value="P:translation"/>
    <property type="evidence" value="ECO:0007669"/>
    <property type="project" value="UniProtKB-UniRule"/>
</dbReference>
<dbReference type="FunFam" id="3.30.1320.10:FF:000001">
    <property type="entry name" value="30S ribosomal protein S16"/>
    <property type="match status" value="1"/>
</dbReference>
<dbReference type="Gene3D" id="3.30.1320.10">
    <property type="match status" value="1"/>
</dbReference>
<dbReference type="HAMAP" id="MF_00385">
    <property type="entry name" value="Ribosomal_bS16"/>
    <property type="match status" value="1"/>
</dbReference>
<dbReference type="InterPro" id="IPR000307">
    <property type="entry name" value="Ribosomal_bS16"/>
</dbReference>
<dbReference type="InterPro" id="IPR020592">
    <property type="entry name" value="Ribosomal_bS16_CS"/>
</dbReference>
<dbReference type="InterPro" id="IPR023803">
    <property type="entry name" value="Ribosomal_bS16_dom_sf"/>
</dbReference>
<dbReference type="NCBIfam" id="TIGR00002">
    <property type="entry name" value="S16"/>
    <property type="match status" value="1"/>
</dbReference>
<dbReference type="PANTHER" id="PTHR12919">
    <property type="entry name" value="30S RIBOSOMAL PROTEIN S16"/>
    <property type="match status" value="1"/>
</dbReference>
<dbReference type="PANTHER" id="PTHR12919:SF20">
    <property type="entry name" value="SMALL RIBOSOMAL SUBUNIT PROTEIN BS16M"/>
    <property type="match status" value="1"/>
</dbReference>
<dbReference type="Pfam" id="PF00886">
    <property type="entry name" value="Ribosomal_S16"/>
    <property type="match status" value="1"/>
</dbReference>
<dbReference type="SUPFAM" id="SSF54565">
    <property type="entry name" value="Ribosomal protein S16"/>
    <property type="match status" value="1"/>
</dbReference>
<dbReference type="PROSITE" id="PS00732">
    <property type="entry name" value="RIBOSOMAL_S16"/>
    <property type="match status" value="1"/>
</dbReference>
<comment type="similarity">
    <text evidence="1">Belongs to the bacterial ribosomal protein bS16 family.</text>
</comment>